<reference key="1">
    <citation type="journal article" date="1998" name="Nature">
        <title>Deciphering the biology of Mycobacterium tuberculosis from the complete genome sequence.</title>
        <authorList>
            <person name="Cole S.T."/>
            <person name="Brosch R."/>
            <person name="Parkhill J."/>
            <person name="Garnier T."/>
            <person name="Churcher C.M."/>
            <person name="Harris D.E."/>
            <person name="Gordon S.V."/>
            <person name="Eiglmeier K."/>
            <person name="Gas S."/>
            <person name="Barry C.E. III"/>
            <person name="Tekaia F."/>
            <person name="Badcock K."/>
            <person name="Basham D."/>
            <person name="Brown D."/>
            <person name="Chillingworth T."/>
            <person name="Connor R."/>
            <person name="Davies R.M."/>
            <person name="Devlin K."/>
            <person name="Feltwell T."/>
            <person name="Gentles S."/>
            <person name="Hamlin N."/>
            <person name="Holroyd S."/>
            <person name="Hornsby T."/>
            <person name="Jagels K."/>
            <person name="Krogh A."/>
            <person name="McLean J."/>
            <person name="Moule S."/>
            <person name="Murphy L.D."/>
            <person name="Oliver S."/>
            <person name="Osborne J."/>
            <person name="Quail M.A."/>
            <person name="Rajandream M.A."/>
            <person name="Rogers J."/>
            <person name="Rutter S."/>
            <person name="Seeger K."/>
            <person name="Skelton S."/>
            <person name="Squares S."/>
            <person name="Squares R."/>
            <person name="Sulston J.E."/>
            <person name="Taylor K."/>
            <person name="Whitehead S."/>
            <person name="Barrell B.G."/>
        </authorList>
    </citation>
    <scope>NUCLEOTIDE SEQUENCE [LARGE SCALE GENOMIC DNA]</scope>
    <source>
        <strain>ATCC 25618 / H37Rv</strain>
    </source>
</reference>
<reference key="2">
    <citation type="journal article" date="2011" name="Mol. Cell. Proteomics">
        <title>Proteogenomic analysis of Mycobacterium tuberculosis by high resolution mass spectrometry.</title>
        <authorList>
            <person name="Kelkar D.S."/>
            <person name="Kumar D."/>
            <person name="Kumar P."/>
            <person name="Balakrishnan L."/>
            <person name="Muthusamy B."/>
            <person name="Yadav A.K."/>
            <person name="Shrivastava P."/>
            <person name="Marimuthu A."/>
            <person name="Anand S."/>
            <person name="Sundaram H."/>
            <person name="Kingsbury R."/>
            <person name="Harsha H.C."/>
            <person name="Nair B."/>
            <person name="Prasad T.S."/>
            <person name="Chauhan D.S."/>
            <person name="Katoch K."/>
            <person name="Katoch V.M."/>
            <person name="Kumar P."/>
            <person name="Chaerkady R."/>
            <person name="Ramachandran S."/>
            <person name="Dash D."/>
            <person name="Pandey A."/>
        </authorList>
    </citation>
    <scope>IDENTIFICATION BY MASS SPECTROMETRY [LARGE SCALE ANALYSIS]</scope>
    <source>
        <strain>ATCC 25618 / H37Rv</strain>
    </source>
</reference>
<name>Y1407_MYCTU</name>
<keyword id="KW-0489">Methyltransferase</keyword>
<keyword id="KW-1185">Reference proteome</keyword>
<keyword id="KW-0694">RNA-binding</keyword>
<keyword id="KW-0949">S-adenosyl-L-methionine</keyword>
<keyword id="KW-0808">Transferase</keyword>
<comment type="function">
    <text evidence="1">May act as RNA methyltransferase.</text>
</comment>
<comment type="similarity">
    <text evidence="2">Belongs to the class I-like SAM-binding methyltransferase superfamily. RsmB/NOP family.</text>
</comment>
<dbReference type="EC" id="2.1.1.-"/>
<dbReference type="EMBL" id="AL123456">
    <property type="protein sequence ID" value="CCP44166.1"/>
    <property type="molecule type" value="Genomic_DNA"/>
</dbReference>
<dbReference type="PIR" id="D70901">
    <property type="entry name" value="D70901"/>
</dbReference>
<dbReference type="RefSeq" id="WP_003898865.1">
    <property type="nucleotide sequence ID" value="NZ_NVQJ01000038.1"/>
</dbReference>
<dbReference type="SMR" id="P9WGX3"/>
<dbReference type="FunCoup" id="P9WGX3">
    <property type="interactions" value="167"/>
</dbReference>
<dbReference type="STRING" id="83332.Rv1407"/>
<dbReference type="PaxDb" id="83332-Rv1407"/>
<dbReference type="DNASU" id="886720"/>
<dbReference type="KEGG" id="mtu:Rv1407"/>
<dbReference type="KEGG" id="mtv:RVBD_1407"/>
<dbReference type="TubercuList" id="Rv1407"/>
<dbReference type="eggNOG" id="COG0144">
    <property type="taxonomic scope" value="Bacteria"/>
</dbReference>
<dbReference type="eggNOG" id="COG0781">
    <property type="taxonomic scope" value="Bacteria"/>
</dbReference>
<dbReference type="InParanoid" id="P9WGX3"/>
<dbReference type="OrthoDB" id="9810297at2"/>
<dbReference type="PhylomeDB" id="P9WGX3"/>
<dbReference type="Proteomes" id="UP000001584">
    <property type="component" value="Chromosome"/>
</dbReference>
<dbReference type="GO" id="GO:0009274">
    <property type="term" value="C:peptidoglycan-based cell wall"/>
    <property type="evidence" value="ECO:0007005"/>
    <property type="project" value="MTBBASE"/>
</dbReference>
<dbReference type="GO" id="GO:0003723">
    <property type="term" value="F:RNA binding"/>
    <property type="evidence" value="ECO:0007669"/>
    <property type="project" value="UniProtKB-KW"/>
</dbReference>
<dbReference type="GO" id="GO:0008173">
    <property type="term" value="F:RNA methyltransferase activity"/>
    <property type="evidence" value="ECO:0007669"/>
    <property type="project" value="InterPro"/>
</dbReference>
<dbReference type="GO" id="GO:0006355">
    <property type="term" value="P:regulation of DNA-templated transcription"/>
    <property type="evidence" value="ECO:0007669"/>
    <property type="project" value="InterPro"/>
</dbReference>
<dbReference type="GO" id="GO:0001510">
    <property type="term" value="P:RNA methylation"/>
    <property type="evidence" value="ECO:0000318"/>
    <property type="project" value="GO_Central"/>
</dbReference>
<dbReference type="CDD" id="cd02440">
    <property type="entry name" value="AdoMet_MTases"/>
    <property type="match status" value="1"/>
</dbReference>
<dbReference type="CDD" id="cd00620">
    <property type="entry name" value="Methyltransferase_Sun"/>
    <property type="match status" value="1"/>
</dbReference>
<dbReference type="FunFam" id="3.40.50.150:FF:000257">
    <property type="entry name" value="16S rRNA methyltransferase"/>
    <property type="match status" value="1"/>
</dbReference>
<dbReference type="Gene3D" id="1.10.940.10">
    <property type="entry name" value="NusB-like"/>
    <property type="match status" value="1"/>
</dbReference>
<dbReference type="Gene3D" id="3.40.50.150">
    <property type="entry name" value="Vaccinia Virus protein VP39"/>
    <property type="match status" value="1"/>
</dbReference>
<dbReference type="InterPro" id="IPR049560">
    <property type="entry name" value="MeTrfase_RsmB-F_NOP2_cat"/>
</dbReference>
<dbReference type="InterPro" id="IPR001678">
    <property type="entry name" value="MeTrfase_RsmB-F_NOP2_dom"/>
</dbReference>
<dbReference type="InterPro" id="IPR035926">
    <property type="entry name" value="NusB-like_sf"/>
</dbReference>
<dbReference type="InterPro" id="IPR006027">
    <property type="entry name" value="NusB_RsmB_TIM44"/>
</dbReference>
<dbReference type="InterPro" id="IPR023267">
    <property type="entry name" value="RCMT"/>
</dbReference>
<dbReference type="InterPro" id="IPR048019">
    <property type="entry name" value="RsmB-like_N"/>
</dbReference>
<dbReference type="InterPro" id="IPR018314">
    <property type="entry name" value="RsmB/NOL1/NOP2-like_CS"/>
</dbReference>
<dbReference type="InterPro" id="IPR029063">
    <property type="entry name" value="SAM-dependent_MTases_sf"/>
</dbReference>
<dbReference type="PANTHER" id="PTHR22807">
    <property type="entry name" value="NOP2 YEAST -RELATED NOL1/NOP2/FMU SUN DOMAIN-CONTAINING"/>
    <property type="match status" value="1"/>
</dbReference>
<dbReference type="PANTHER" id="PTHR22807:SF53">
    <property type="entry name" value="RIBOSOMAL RNA SMALL SUBUNIT METHYLTRANSFERASE B-RELATED"/>
    <property type="match status" value="1"/>
</dbReference>
<dbReference type="Pfam" id="PF01189">
    <property type="entry name" value="Methyltr_RsmB-F"/>
    <property type="match status" value="1"/>
</dbReference>
<dbReference type="Pfam" id="PF01029">
    <property type="entry name" value="NusB"/>
    <property type="match status" value="1"/>
</dbReference>
<dbReference type="PRINTS" id="PR02008">
    <property type="entry name" value="RCMTFAMILY"/>
</dbReference>
<dbReference type="SUPFAM" id="SSF48013">
    <property type="entry name" value="NusB-like"/>
    <property type="match status" value="1"/>
</dbReference>
<dbReference type="SUPFAM" id="SSF53335">
    <property type="entry name" value="S-adenosyl-L-methionine-dependent methyltransferases"/>
    <property type="match status" value="1"/>
</dbReference>
<dbReference type="PROSITE" id="PS01153">
    <property type="entry name" value="NOL1_NOP2_SUN"/>
    <property type="match status" value="1"/>
</dbReference>
<dbReference type="PROSITE" id="PS51686">
    <property type="entry name" value="SAM_MT_RSMB_NOP"/>
    <property type="match status" value="1"/>
</dbReference>
<proteinExistence type="evidence at protein level"/>
<sequence>MTPRSRGPRRRPLDPARRAAFETLRAVSARDAYANLVLPALLAQRGIGGRDAAFATELTYGTCRARGLLDAVIGAAAERSPQAIDPVLLDLLRLGTYQLLRTRVDAHAAVSTTVEQAGIEFDSARAGFVNGVLRTIAGRDERSWVGELAPDAQNDPIGHAAFVHAHPRWIAQAFADALGAAVGELEAVLASDDERPAVHLAARPGVLTAGELARAVRGTVGRYSPFAVYLPRGDPGRLAPVRDGQALVQDEGSQLVARALTLAPVDGDTGRWLDLCAGPGGKTALLAGLGLQCAARVTAVEPSPHRADLVAQNTRGLPVELLRVDGRHTDLDPGFDRVLVDAPCTGLGALRRRPEARWRRQPADVAALAKLQRELLSAAIALTRPGGVVLYATCSPHLAETVGAVADALRRHPVHALDTRPLFEPVIAGLGEGPHVQLWPHRHGTDAMFAAALRRLT</sequence>
<evidence type="ECO:0000250" key="1"/>
<evidence type="ECO:0000255" key="2">
    <source>
        <dbReference type="PROSITE-ProRule" id="PRU01023"/>
    </source>
</evidence>
<feature type="chain" id="PRO_0000211823" description="Putative methyltransferase Rv1407">
    <location>
        <begin position="1"/>
        <end position="457"/>
    </location>
</feature>
<feature type="active site" description="Nucleophile" evidence="2">
    <location>
        <position position="394"/>
    </location>
</feature>
<feature type="binding site" evidence="2">
    <location>
        <begin position="276"/>
        <end position="282"/>
    </location>
    <ligand>
        <name>S-adenosyl-L-methionine</name>
        <dbReference type="ChEBI" id="CHEBI:59789"/>
    </ligand>
</feature>
<feature type="binding site" evidence="2">
    <location>
        <position position="301"/>
    </location>
    <ligand>
        <name>S-adenosyl-L-methionine</name>
        <dbReference type="ChEBI" id="CHEBI:59789"/>
    </ligand>
</feature>
<feature type="binding site" evidence="2">
    <location>
        <position position="325"/>
    </location>
    <ligand>
        <name>S-adenosyl-L-methionine</name>
        <dbReference type="ChEBI" id="CHEBI:59789"/>
    </ligand>
</feature>
<feature type="binding site" evidence="2">
    <location>
        <position position="341"/>
    </location>
    <ligand>
        <name>S-adenosyl-L-methionine</name>
        <dbReference type="ChEBI" id="CHEBI:59789"/>
    </ligand>
</feature>
<organism>
    <name type="scientific">Mycobacterium tuberculosis (strain ATCC 25618 / H37Rv)</name>
    <dbReference type="NCBI Taxonomy" id="83332"/>
    <lineage>
        <taxon>Bacteria</taxon>
        <taxon>Bacillati</taxon>
        <taxon>Actinomycetota</taxon>
        <taxon>Actinomycetes</taxon>
        <taxon>Mycobacteriales</taxon>
        <taxon>Mycobacteriaceae</taxon>
        <taxon>Mycobacterium</taxon>
        <taxon>Mycobacterium tuberculosis complex</taxon>
    </lineage>
</organism>
<accession>P9WGX3</accession>
<accession>L0T6K0</accession>
<accession>P71675</accession>
<gene>
    <name type="ordered locus">Rv1407</name>
    <name type="ORF">MTCY21B4.24</name>
</gene>
<protein>
    <recommendedName>
        <fullName>Putative methyltransferase Rv1407</fullName>
        <ecNumber>2.1.1.-</ecNumber>
    </recommendedName>
</protein>